<organism>
    <name type="scientific">Rattus norvegicus</name>
    <name type="common">Rat</name>
    <dbReference type="NCBI Taxonomy" id="10116"/>
    <lineage>
        <taxon>Eukaryota</taxon>
        <taxon>Metazoa</taxon>
        <taxon>Chordata</taxon>
        <taxon>Craniata</taxon>
        <taxon>Vertebrata</taxon>
        <taxon>Euteleostomi</taxon>
        <taxon>Mammalia</taxon>
        <taxon>Eutheria</taxon>
        <taxon>Euarchontoglires</taxon>
        <taxon>Glires</taxon>
        <taxon>Rodentia</taxon>
        <taxon>Myomorpha</taxon>
        <taxon>Muroidea</taxon>
        <taxon>Muridae</taxon>
        <taxon>Murinae</taxon>
        <taxon>Rattus</taxon>
    </lineage>
</organism>
<reference key="1">
    <citation type="journal article" date="2000" name="J. Biol. Chem.">
        <title>A novel cytosolic dual specificity phosphatase, interacting with glucokinase, increases glucose phosphorylation rate.</title>
        <authorList>
            <person name="Munoz-Alonso M.J."/>
            <person name="Guillemain G."/>
            <person name="Kassis N."/>
            <person name="Girard J."/>
            <person name="Burnol A.-F."/>
            <person name="Leturque A."/>
        </authorList>
    </citation>
    <scope>NUCLEOTIDE SEQUENCE [MRNA]</scope>
    <scope>FUNCTION</scope>
    <scope>SUBCELLULAR LOCATION</scope>
    <scope>CATALYTIC ACTIVITY</scope>
</reference>
<accession>Q9JIM4</accession>
<protein>
    <recommendedName>
        <fullName>Dual specificity protein phosphatase 12</fullName>
        <ecNumber evidence="5">3.1.3.16</ecNumber>
        <ecNumber evidence="5">3.1.3.48</ecNumber>
    </recommendedName>
    <alternativeName>
        <fullName>Glucokinase-associated dual specificity phosphatase</fullName>
        <shortName>GKAP</shortName>
    </alternativeName>
</protein>
<evidence type="ECO:0000250" key="1"/>
<evidence type="ECO:0000250" key="2">
    <source>
        <dbReference type="UniProtKB" id="Q9UNI6"/>
    </source>
</evidence>
<evidence type="ECO:0000255" key="3">
    <source>
        <dbReference type="PROSITE-ProRule" id="PRU00160"/>
    </source>
</evidence>
<evidence type="ECO:0000256" key="4">
    <source>
        <dbReference type="SAM" id="MobiDB-lite"/>
    </source>
</evidence>
<evidence type="ECO:0000269" key="5">
    <source>
    </source>
</evidence>
<evidence type="ECO:0000305" key="6"/>
<gene>
    <name type="primary">Dusp12</name>
    <name type="synonym">Gkap</name>
</gene>
<sequence length="339" mass="37196">MLEVQSSNHGCERQAPTTSPASSAGHAVEVRPGLYLGGAAAVAGPDYLREAGITAVLTVDSEPAFPAGAGFEGLQSLFVPALDKPETDLLSHLDRCVAFIGQARSEGRAVLVHCHAGVSRSVAVVTAFIMKTEQLTFEKAYENLQTIKPEAKMNEGFEWQLKLYEAMGHEVHTSSAVYKQYRLQKVTEKYPELRNLPRELFAVDPTTVSQGLKDDILYKCRKCRRSLFRRSSILDHSEGSGPVAFAHKRTGLSSVLTTGNQAQCTSYFIEPVQWMESALLGVMDGQLLCPKCSAKLGSFNWYGEQCSCGRWITPAFQIHKNRVDEVKTLPALGSQTKKP</sequence>
<dbReference type="EC" id="3.1.3.16" evidence="5"/>
<dbReference type="EC" id="3.1.3.48" evidence="5"/>
<dbReference type="EMBL" id="AF217233">
    <property type="protein sequence ID" value="AAF87971.1"/>
    <property type="molecule type" value="mRNA"/>
</dbReference>
<dbReference type="RefSeq" id="NP_071584.1">
    <property type="nucleotide sequence ID" value="NM_022248.2"/>
</dbReference>
<dbReference type="SMR" id="Q9JIM4"/>
<dbReference type="FunCoup" id="Q9JIM4">
    <property type="interactions" value="2856"/>
</dbReference>
<dbReference type="STRING" id="10116.ENSRNOP00000004179"/>
<dbReference type="GlyGen" id="Q9JIM4">
    <property type="glycosylation" value="1 site"/>
</dbReference>
<dbReference type="PhosphoSitePlus" id="Q9JIM4"/>
<dbReference type="PaxDb" id="10116-ENSRNOP00000004179"/>
<dbReference type="Ensembl" id="ENSRNOT00000004179.4">
    <property type="protein sequence ID" value="ENSRNOP00000004179.2"/>
    <property type="gene ID" value="ENSRNOG00000003100.6"/>
</dbReference>
<dbReference type="GeneID" id="64014"/>
<dbReference type="KEGG" id="rno:64014"/>
<dbReference type="UCSC" id="RGD:68375">
    <property type="organism name" value="rat"/>
</dbReference>
<dbReference type="AGR" id="RGD:68375"/>
<dbReference type="CTD" id="11266"/>
<dbReference type="RGD" id="68375">
    <property type="gene designation" value="Dusp12"/>
</dbReference>
<dbReference type="eggNOG" id="KOG1716">
    <property type="taxonomic scope" value="Eukaryota"/>
</dbReference>
<dbReference type="GeneTree" id="ENSGT00930000151041"/>
<dbReference type="HOGENOM" id="CLU_023312_1_0_1"/>
<dbReference type="InParanoid" id="Q9JIM4"/>
<dbReference type="OMA" id="FAWQGMQ"/>
<dbReference type="OrthoDB" id="426001at2759"/>
<dbReference type="PhylomeDB" id="Q9JIM4"/>
<dbReference type="TreeFam" id="TF105123"/>
<dbReference type="PRO" id="PR:Q9JIM4"/>
<dbReference type="Proteomes" id="UP000002494">
    <property type="component" value="Chromosome 13"/>
</dbReference>
<dbReference type="Bgee" id="ENSRNOG00000003100">
    <property type="expression patterns" value="Expressed in thymus and 19 other cell types or tissues"/>
</dbReference>
<dbReference type="GO" id="GO:0005737">
    <property type="term" value="C:cytoplasm"/>
    <property type="evidence" value="ECO:0000266"/>
    <property type="project" value="RGD"/>
</dbReference>
<dbReference type="GO" id="GO:0005829">
    <property type="term" value="C:cytosol"/>
    <property type="evidence" value="ECO:0007669"/>
    <property type="project" value="UniProtKB-SubCell"/>
</dbReference>
<dbReference type="GO" id="GO:0005654">
    <property type="term" value="C:nucleoplasm"/>
    <property type="evidence" value="ECO:0007669"/>
    <property type="project" value="Ensembl"/>
</dbReference>
<dbReference type="GO" id="GO:0005634">
    <property type="term" value="C:nucleus"/>
    <property type="evidence" value="ECO:0000250"/>
    <property type="project" value="UniProtKB"/>
</dbReference>
<dbReference type="GO" id="GO:0019900">
    <property type="term" value="F:kinase binding"/>
    <property type="evidence" value="ECO:0000353"/>
    <property type="project" value="RGD"/>
</dbReference>
<dbReference type="GO" id="GO:0016791">
    <property type="term" value="F:phosphatase activity"/>
    <property type="evidence" value="ECO:0000266"/>
    <property type="project" value="RGD"/>
</dbReference>
<dbReference type="GO" id="GO:0004721">
    <property type="term" value="F:phosphoprotein phosphatase activity"/>
    <property type="evidence" value="ECO:0000314"/>
    <property type="project" value="RGD"/>
</dbReference>
<dbReference type="GO" id="GO:0004722">
    <property type="term" value="F:protein serine/threonine phosphatase activity"/>
    <property type="evidence" value="ECO:0007669"/>
    <property type="project" value="UniProtKB-EC"/>
</dbReference>
<dbReference type="GO" id="GO:0004725">
    <property type="term" value="F:protein tyrosine phosphatase activity"/>
    <property type="evidence" value="ECO:0007669"/>
    <property type="project" value="UniProtKB-EC"/>
</dbReference>
<dbReference type="GO" id="GO:0008138">
    <property type="term" value="F:protein tyrosine/serine/threonine phosphatase activity"/>
    <property type="evidence" value="ECO:0000266"/>
    <property type="project" value="RGD"/>
</dbReference>
<dbReference type="GO" id="GO:0008270">
    <property type="term" value="F:zinc ion binding"/>
    <property type="evidence" value="ECO:0000250"/>
    <property type="project" value="UniProtKB"/>
</dbReference>
<dbReference type="CDD" id="cd14520">
    <property type="entry name" value="DSP_DUSP12"/>
    <property type="match status" value="1"/>
</dbReference>
<dbReference type="FunFam" id="3.90.190.10:FF:000056">
    <property type="entry name" value="Dual specificity phosphatase 12"/>
    <property type="match status" value="1"/>
</dbReference>
<dbReference type="Gene3D" id="3.90.190.10">
    <property type="entry name" value="Protein tyrosine phosphatase superfamily"/>
    <property type="match status" value="1"/>
</dbReference>
<dbReference type="InterPro" id="IPR000340">
    <property type="entry name" value="Dual-sp_phosphatase_cat-dom"/>
</dbReference>
<dbReference type="InterPro" id="IPR016278">
    <property type="entry name" value="DUSP12"/>
</dbReference>
<dbReference type="InterPro" id="IPR029021">
    <property type="entry name" value="Prot-tyrosine_phosphatase-like"/>
</dbReference>
<dbReference type="InterPro" id="IPR000387">
    <property type="entry name" value="Tyr_Pase_dom"/>
</dbReference>
<dbReference type="InterPro" id="IPR020422">
    <property type="entry name" value="TYR_PHOSPHATASE_DUAL_dom"/>
</dbReference>
<dbReference type="PANTHER" id="PTHR45848:SF4">
    <property type="entry name" value="DUAL SPECIFICITY PROTEIN PHOSPHATASE 12"/>
    <property type="match status" value="1"/>
</dbReference>
<dbReference type="PANTHER" id="PTHR45848">
    <property type="entry name" value="DUAL SPECIFICITY PROTEIN PHOSPHATASE 12 FAMILY MEMBER"/>
    <property type="match status" value="1"/>
</dbReference>
<dbReference type="Pfam" id="PF00782">
    <property type="entry name" value="DSPc"/>
    <property type="match status" value="1"/>
</dbReference>
<dbReference type="PIRSF" id="PIRSF000941">
    <property type="entry name" value="DUSP12"/>
    <property type="match status" value="1"/>
</dbReference>
<dbReference type="SMART" id="SM00195">
    <property type="entry name" value="DSPc"/>
    <property type="match status" value="1"/>
</dbReference>
<dbReference type="SUPFAM" id="SSF52799">
    <property type="entry name" value="(Phosphotyrosine protein) phosphatases II"/>
    <property type="match status" value="1"/>
</dbReference>
<dbReference type="PROSITE" id="PS50056">
    <property type="entry name" value="TYR_PHOSPHATASE_2"/>
    <property type="match status" value="1"/>
</dbReference>
<dbReference type="PROSITE" id="PS50054">
    <property type="entry name" value="TYR_PHOSPHATASE_DUAL"/>
    <property type="match status" value="1"/>
</dbReference>
<proteinExistence type="evidence at protein level"/>
<keyword id="KW-0007">Acetylation</keyword>
<keyword id="KW-0963">Cytoplasm</keyword>
<keyword id="KW-0378">Hydrolase</keyword>
<keyword id="KW-0479">Metal-binding</keyword>
<keyword id="KW-0539">Nucleus</keyword>
<keyword id="KW-0597">Phosphoprotein</keyword>
<keyword id="KW-0904">Protein phosphatase</keyword>
<keyword id="KW-1185">Reference proteome</keyword>
<keyword id="KW-0862">Zinc</keyword>
<feature type="chain" id="PRO_0000260313" description="Dual specificity protein phosphatase 12">
    <location>
        <begin position="1"/>
        <end position="339"/>
    </location>
</feature>
<feature type="domain" description="Tyrosine-protein phosphatase" evidence="3">
    <location>
        <begin position="26"/>
        <end position="170"/>
    </location>
</feature>
<feature type="region of interest" description="Disordered" evidence="4">
    <location>
        <begin position="1"/>
        <end position="25"/>
    </location>
</feature>
<feature type="compositionally biased region" description="Polar residues" evidence="4">
    <location>
        <begin position="1"/>
        <end position="22"/>
    </location>
</feature>
<feature type="active site" description="Phosphocysteine intermediate" evidence="3">
    <location>
        <position position="114"/>
    </location>
</feature>
<feature type="binding site" evidence="2">
    <location>
        <begin position="115"/>
        <end position="120"/>
    </location>
    <ligand>
        <name>substrate</name>
    </ligand>
</feature>
<feature type="modified residue" description="N-acetylmethionine" evidence="2">
    <location>
        <position position="1"/>
    </location>
</feature>
<feature type="modified residue" description="Phosphoserine" evidence="2">
    <location>
        <position position="334"/>
    </location>
</feature>
<comment type="function">
    <text evidence="5">Dual specificity phosphatase; can dephosphorylate both phosphotyrosine and phosphoserine or phosphothreonine residues. Can dephosphorylate glucokinase (in vitro). Has phosphatase activity with the synthetic substrate 6,8-difluoro-4-methylumbelliferyl phosphate and other in vitro substrates.</text>
</comment>
<comment type="catalytic activity">
    <reaction evidence="5">
        <text>O-phospho-L-tyrosyl-[protein] + H2O = L-tyrosyl-[protein] + phosphate</text>
        <dbReference type="Rhea" id="RHEA:10684"/>
        <dbReference type="Rhea" id="RHEA-COMP:10136"/>
        <dbReference type="Rhea" id="RHEA-COMP:20101"/>
        <dbReference type="ChEBI" id="CHEBI:15377"/>
        <dbReference type="ChEBI" id="CHEBI:43474"/>
        <dbReference type="ChEBI" id="CHEBI:46858"/>
        <dbReference type="ChEBI" id="CHEBI:61978"/>
        <dbReference type="EC" id="3.1.3.48"/>
    </reaction>
</comment>
<comment type="catalytic activity">
    <reaction evidence="5">
        <text>O-phospho-L-seryl-[protein] + H2O = L-seryl-[protein] + phosphate</text>
        <dbReference type="Rhea" id="RHEA:20629"/>
        <dbReference type="Rhea" id="RHEA-COMP:9863"/>
        <dbReference type="Rhea" id="RHEA-COMP:11604"/>
        <dbReference type="ChEBI" id="CHEBI:15377"/>
        <dbReference type="ChEBI" id="CHEBI:29999"/>
        <dbReference type="ChEBI" id="CHEBI:43474"/>
        <dbReference type="ChEBI" id="CHEBI:83421"/>
        <dbReference type="EC" id="3.1.3.16"/>
    </reaction>
</comment>
<comment type="catalytic activity">
    <reaction evidence="5">
        <text>O-phospho-L-threonyl-[protein] + H2O = L-threonyl-[protein] + phosphate</text>
        <dbReference type="Rhea" id="RHEA:47004"/>
        <dbReference type="Rhea" id="RHEA-COMP:11060"/>
        <dbReference type="Rhea" id="RHEA-COMP:11605"/>
        <dbReference type="ChEBI" id="CHEBI:15377"/>
        <dbReference type="ChEBI" id="CHEBI:30013"/>
        <dbReference type="ChEBI" id="CHEBI:43474"/>
        <dbReference type="ChEBI" id="CHEBI:61977"/>
        <dbReference type="EC" id="3.1.3.16"/>
    </reaction>
</comment>
<comment type="cofactor">
    <cofactor evidence="1">
        <name>Zn(2+)</name>
        <dbReference type="ChEBI" id="CHEBI:29105"/>
    </cofactor>
    <text evidence="1">Binds 2 Zn(2+) ions per subunit.</text>
</comment>
<comment type="subunit">
    <text evidence="2">Monomer.</text>
</comment>
<comment type="subcellular location">
    <subcellularLocation>
        <location evidence="2">Nucleus</location>
    </subcellularLocation>
    <subcellularLocation>
        <location evidence="5">Cytoplasm</location>
    </subcellularLocation>
    <subcellularLocation>
        <location evidence="2">Cytoplasm</location>
        <location evidence="2">Cytosol</location>
    </subcellularLocation>
    <text evidence="2">Primarily nuclear. Detected in a mesh-like pattern in the cytosol.</text>
</comment>
<comment type="similarity">
    <text evidence="6">Belongs to the protein-tyrosine phosphatase family. Non-receptor class dual specificity subfamily.</text>
</comment>
<name>DUS12_RAT</name>